<feature type="chain" id="PRO_0000316004" description="CDGSH iron-sulfur domain-containing protein 2">
    <location>
        <begin position="1"/>
        <end position="135"/>
    </location>
</feature>
<feature type="topological domain" description="Lumenal" evidence="2">
    <location>
        <begin position="1"/>
        <end position="37"/>
    </location>
</feature>
<feature type="transmembrane region" description="Helical" evidence="2">
    <location>
        <begin position="38"/>
        <end position="60"/>
    </location>
</feature>
<feature type="topological domain" description="Cytoplasmic" evidence="2">
    <location>
        <begin position="61"/>
        <end position="135"/>
    </location>
</feature>
<feature type="binding site" evidence="1">
    <location>
        <position position="99"/>
    </location>
    <ligand>
        <name>[2Fe-2S] cluster</name>
        <dbReference type="ChEBI" id="CHEBI:190135"/>
    </ligand>
</feature>
<feature type="binding site" evidence="1">
    <location>
        <position position="101"/>
    </location>
    <ligand>
        <name>[2Fe-2S] cluster</name>
        <dbReference type="ChEBI" id="CHEBI:190135"/>
    </ligand>
</feature>
<feature type="binding site" evidence="1">
    <location>
        <position position="110"/>
    </location>
    <ligand>
        <name>[2Fe-2S] cluster</name>
        <dbReference type="ChEBI" id="CHEBI:190135"/>
    </ligand>
</feature>
<feature type="binding site" evidence="1">
    <location>
        <position position="114"/>
    </location>
    <ligand>
        <name>[2Fe-2S] cluster</name>
        <dbReference type="ChEBI" id="CHEBI:190135"/>
    </ligand>
</feature>
<reference key="1">
    <citation type="submission" date="2006-08" db="EMBL/GenBank/DDBJ databases">
        <authorList>
            <consortium name="NIH - Mammalian Gene Collection (MGC) project"/>
        </authorList>
    </citation>
    <scope>NUCLEOTIDE SEQUENCE [LARGE SCALE MRNA]</scope>
    <source>
        <strain>Hereford</strain>
        <tissue>Hippocampus</tissue>
    </source>
</reference>
<accession>Q05B71</accession>
<comment type="function">
    <text evidence="1">Regulator of autophagy that contributes to antagonize BECN1-mediated cellular autophagy at the endoplasmic reticulum. Participates in the interaction of BCL2 with BECN1 and is required for BCL2-mediated depression of endoplasmic reticulum Ca(2+) stores during autophagy. Contributes to BIK-initiated autophagy, while it is not involved in BIK-dependent activation of caspases. Involved in life span control, probably via its function as regulator of autophagy (By similarity).</text>
</comment>
<comment type="cofactor">
    <cofactor evidence="1">
        <name>[2Fe-2S] cluster</name>
        <dbReference type="ChEBI" id="CHEBI:190135"/>
    </cofactor>
    <text evidence="1">Binds 1 [2Fe-2S] cluster.</text>
</comment>
<comment type="subunit">
    <text evidence="1">Homodimer. Interacts with BCL2; the interaction is direct and disrupted by BIK interaction with BCL2. Interacts with BCL2L1. Interacts with ITPR1 (By similarity).</text>
</comment>
<comment type="subcellular location">
    <subcellularLocation>
        <location evidence="1">Endoplasmic reticulum membrane</location>
        <topology evidence="1">Single-pass membrane protein</topology>
    </subcellularLocation>
    <subcellularLocation>
        <location evidence="1">Mitochondrion outer membrane</location>
        <topology evidence="1">Single-pass membrane protein</topology>
    </subcellularLocation>
</comment>
<comment type="similarity">
    <text evidence="3">Belongs to the CISD protein family. CISD2 subfamily.</text>
</comment>
<evidence type="ECO:0000250" key="1"/>
<evidence type="ECO:0000255" key="2"/>
<evidence type="ECO:0000305" key="3"/>
<gene>
    <name type="primary">CISD2</name>
    <name type="synonym">CDGSH2</name>
</gene>
<proteinExistence type="evidence at transcript level"/>
<keyword id="KW-0001">2Fe-2S</keyword>
<keyword id="KW-0072">Autophagy</keyword>
<keyword id="KW-0256">Endoplasmic reticulum</keyword>
<keyword id="KW-0408">Iron</keyword>
<keyword id="KW-0411">Iron-sulfur</keyword>
<keyword id="KW-0472">Membrane</keyword>
<keyword id="KW-0479">Metal-binding</keyword>
<keyword id="KW-0496">Mitochondrion</keyword>
<keyword id="KW-1000">Mitochondrion outer membrane</keyword>
<keyword id="KW-1185">Reference proteome</keyword>
<keyword id="KW-0812">Transmembrane</keyword>
<keyword id="KW-1133">Transmembrane helix</keyword>
<dbReference type="EMBL" id="BC122676">
    <property type="protein sequence ID" value="AAI22677.1"/>
    <property type="molecule type" value="mRNA"/>
</dbReference>
<dbReference type="RefSeq" id="NP_001073807.1">
    <property type="nucleotide sequence ID" value="NM_001080338.1"/>
</dbReference>
<dbReference type="SMR" id="Q05B71"/>
<dbReference type="FunCoup" id="Q05B71">
    <property type="interactions" value="3031"/>
</dbReference>
<dbReference type="STRING" id="9913.ENSBTAP00000039580"/>
<dbReference type="PaxDb" id="9913-ENSBTAP00000039580"/>
<dbReference type="GeneID" id="781260"/>
<dbReference type="KEGG" id="bta:781260"/>
<dbReference type="CTD" id="493856"/>
<dbReference type="eggNOG" id="KOG3461">
    <property type="taxonomic scope" value="Eukaryota"/>
</dbReference>
<dbReference type="HOGENOM" id="CLU_132293_1_0_1"/>
<dbReference type="InParanoid" id="Q05B71"/>
<dbReference type="OrthoDB" id="449252at2759"/>
<dbReference type="TreeFam" id="TF324661"/>
<dbReference type="Proteomes" id="UP000009136">
    <property type="component" value="Unplaced"/>
</dbReference>
<dbReference type="GO" id="GO:0005789">
    <property type="term" value="C:endoplasmic reticulum membrane"/>
    <property type="evidence" value="ECO:0000250"/>
    <property type="project" value="UniProtKB"/>
</dbReference>
<dbReference type="GO" id="GO:0005741">
    <property type="term" value="C:mitochondrial outer membrane"/>
    <property type="evidence" value="ECO:0000250"/>
    <property type="project" value="UniProtKB"/>
</dbReference>
<dbReference type="GO" id="GO:0051537">
    <property type="term" value="F:2 iron, 2 sulfur cluster binding"/>
    <property type="evidence" value="ECO:0000250"/>
    <property type="project" value="UniProtKB"/>
</dbReference>
<dbReference type="GO" id="GO:0046872">
    <property type="term" value="F:metal ion binding"/>
    <property type="evidence" value="ECO:0007669"/>
    <property type="project" value="UniProtKB-KW"/>
</dbReference>
<dbReference type="GO" id="GO:0042803">
    <property type="term" value="F:protein homodimerization activity"/>
    <property type="evidence" value="ECO:0000250"/>
    <property type="project" value="UniProtKB"/>
</dbReference>
<dbReference type="GO" id="GO:0000422">
    <property type="term" value="P:autophagy of mitochondrion"/>
    <property type="evidence" value="ECO:0000250"/>
    <property type="project" value="UniProtKB"/>
</dbReference>
<dbReference type="GO" id="GO:0010506">
    <property type="term" value="P:regulation of autophagy"/>
    <property type="evidence" value="ECO:0000250"/>
    <property type="project" value="UniProtKB"/>
</dbReference>
<dbReference type="FunFam" id="3.40.5.90:FF:000001">
    <property type="entry name" value="CDGSH iron-sulfur domain-containing protein 1"/>
    <property type="match status" value="1"/>
</dbReference>
<dbReference type="Gene3D" id="3.40.5.90">
    <property type="entry name" value="CDGSH iron-sulfur domain, mitoNEET-type"/>
    <property type="match status" value="1"/>
</dbReference>
<dbReference type="InterPro" id="IPR045131">
    <property type="entry name" value="CISD1/2"/>
</dbReference>
<dbReference type="InterPro" id="IPR018967">
    <property type="entry name" value="FeS-contain_CDGSH-typ"/>
</dbReference>
<dbReference type="InterPro" id="IPR019610">
    <property type="entry name" value="FeS-contain_mitoNEET_N"/>
</dbReference>
<dbReference type="InterPro" id="IPR042216">
    <property type="entry name" value="MitoNEET_CISD"/>
</dbReference>
<dbReference type="PANTHER" id="PTHR13680">
    <property type="entry name" value="CDGSH IRON-SULFUR DOMAIN-CONTAINING PROTEIN 1"/>
    <property type="match status" value="1"/>
</dbReference>
<dbReference type="PANTHER" id="PTHR13680:SF33">
    <property type="entry name" value="CDGSH IRON-SULFUR DOMAIN-CONTAINING PROTEIN 2"/>
    <property type="match status" value="1"/>
</dbReference>
<dbReference type="Pfam" id="PF10660">
    <property type="entry name" value="MitoNEET_N"/>
    <property type="match status" value="1"/>
</dbReference>
<dbReference type="Pfam" id="PF09360">
    <property type="entry name" value="zf-CDGSH"/>
    <property type="match status" value="1"/>
</dbReference>
<dbReference type="SMART" id="SM00704">
    <property type="entry name" value="ZnF_CDGSH"/>
    <property type="match status" value="1"/>
</dbReference>
<name>CISD2_BOVIN</name>
<organism>
    <name type="scientific">Bos taurus</name>
    <name type="common">Bovine</name>
    <dbReference type="NCBI Taxonomy" id="9913"/>
    <lineage>
        <taxon>Eukaryota</taxon>
        <taxon>Metazoa</taxon>
        <taxon>Chordata</taxon>
        <taxon>Craniata</taxon>
        <taxon>Vertebrata</taxon>
        <taxon>Euteleostomi</taxon>
        <taxon>Mammalia</taxon>
        <taxon>Eutheria</taxon>
        <taxon>Laurasiatheria</taxon>
        <taxon>Artiodactyla</taxon>
        <taxon>Ruminantia</taxon>
        <taxon>Pecora</taxon>
        <taxon>Bovidae</taxon>
        <taxon>Bovinae</taxon>
        <taxon>Bos</taxon>
    </lineage>
</organism>
<protein>
    <recommendedName>
        <fullName>CDGSH iron-sulfur domain-containing protein 2</fullName>
    </recommendedName>
</protein>
<sequence length="135" mass="15278">MVLESVARIVKVQLPAYLKRLPVPESITGFARLTVSEWLRLLPFLGVLALLGYLAVRPFLPKKKQQKDSLINLKIQKENPKVVNEINIEDLCLTKAAYCRCWRSKTFPACDGSHNKHNELTGDNVGPLILKKKEV</sequence>